<keyword id="KW-0963">Cytoplasm</keyword>
<keyword id="KW-0489">Methyltransferase</keyword>
<keyword id="KW-0949">S-adenosyl-L-methionine</keyword>
<keyword id="KW-0808">Transferase</keyword>
<keyword id="KW-0819">tRNA processing</keyword>
<sequence length="243" mass="27957">MKIDILTLFPEMFAPLEHSIVGKAKEKGLLDIHYHNFRDYAEKARHVDDEPYGGGQGMLLRAQPIFDTIEQIEAKKPRIILLDPAGKPFTQAYAEELALEEELIFICGHYEGYDERIKTLVTDEISLGDFVLTGGELAAMTMVDATVRLIPQVLGKESSHQDDSFSSGLLEYPQYTRPYDYRGMTVPDVLMSGHHERIRLWRLEESLRKTCLRRPDLLEHYNFSEEERKLLDKIKEALDQGED</sequence>
<comment type="function">
    <text evidence="1">Specifically methylates guanosine-37 in various tRNAs.</text>
</comment>
<comment type="catalytic activity">
    <reaction evidence="1">
        <text>guanosine(37) in tRNA + S-adenosyl-L-methionine = N(1)-methylguanosine(37) in tRNA + S-adenosyl-L-homocysteine + H(+)</text>
        <dbReference type="Rhea" id="RHEA:36899"/>
        <dbReference type="Rhea" id="RHEA-COMP:10145"/>
        <dbReference type="Rhea" id="RHEA-COMP:10147"/>
        <dbReference type="ChEBI" id="CHEBI:15378"/>
        <dbReference type="ChEBI" id="CHEBI:57856"/>
        <dbReference type="ChEBI" id="CHEBI:59789"/>
        <dbReference type="ChEBI" id="CHEBI:73542"/>
        <dbReference type="ChEBI" id="CHEBI:74269"/>
        <dbReference type="EC" id="2.1.1.228"/>
    </reaction>
</comment>
<comment type="subunit">
    <text evidence="1">Homodimer.</text>
</comment>
<comment type="subcellular location">
    <subcellularLocation>
        <location evidence="1">Cytoplasm</location>
    </subcellularLocation>
</comment>
<comment type="similarity">
    <text evidence="1">Belongs to the RNA methyltransferase TrmD family.</text>
</comment>
<feature type="chain" id="PRO_0000257479" description="tRNA (guanine-N(1)-)-methyltransferase">
    <location>
        <begin position="1"/>
        <end position="243"/>
    </location>
</feature>
<feature type="binding site" evidence="1">
    <location>
        <position position="108"/>
    </location>
    <ligand>
        <name>S-adenosyl-L-methionine</name>
        <dbReference type="ChEBI" id="CHEBI:59789"/>
    </ligand>
</feature>
<feature type="binding site" evidence="1">
    <location>
        <begin position="127"/>
        <end position="132"/>
    </location>
    <ligand>
        <name>S-adenosyl-L-methionine</name>
        <dbReference type="ChEBI" id="CHEBI:59789"/>
    </ligand>
</feature>
<protein>
    <recommendedName>
        <fullName evidence="1">tRNA (guanine-N(1)-)-methyltransferase</fullName>
        <ecNumber evidence="1">2.1.1.228</ecNumber>
    </recommendedName>
    <alternativeName>
        <fullName evidence="1">M1G-methyltransferase</fullName>
    </alternativeName>
    <alternativeName>
        <fullName evidence="1">tRNA [GM37] methyltransferase</fullName>
    </alternativeName>
</protein>
<evidence type="ECO:0000255" key="1">
    <source>
        <dbReference type="HAMAP-Rule" id="MF_00605"/>
    </source>
</evidence>
<accession>Q1JHF6</accession>
<gene>
    <name evidence="1" type="primary">trmD</name>
    <name type="ordered locus">MGAS10270_Spy0715</name>
</gene>
<organism>
    <name type="scientific">Streptococcus pyogenes serotype M2 (strain MGAS10270)</name>
    <dbReference type="NCBI Taxonomy" id="370552"/>
    <lineage>
        <taxon>Bacteria</taxon>
        <taxon>Bacillati</taxon>
        <taxon>Bacillota</taxon>
        <taxon>Bacilli</taxon>
        <taxon>Lactobacillales</taxon>
        <taxon>Streptococcaceae</taxon>
        <taxon>Streptococcus</taxon>
    </lineage>
</organism>
<reference key="1">
    <citation type="journal article" date="2006" name="Proc. Natl. Acad. Sci. U.S.A.">
        <title>Molecular genetic anatomy of inter- and intraserotype variation in the human bacterial pathogen group A Streptococcus.</title>
        <authorList>
            <person name="Beres S.B."/>
            <person name="Richter E.W."/>
            <person name="Nagiec M.J."/>
            <person name="Sumby P."/>
            <person name="Porcella S.F."/>
            <person name="DeLeo F.R."/>
            <person name="Musser J.M."/>
        </authorList>
    </citation>
    <scope>NUCLEOTIDE SEQUENCE [LARGE SCALE GENOMIC DNA]</scope>
    <source>
        <strain>MGAS10270</strain>
    </source>
</reference>
<dbReference type="EC" id="2.1.1.228" evidence="1"/>
<dbReference type="EMBL" id="CP000260">
    <property type="protein sequence ID" value="ABF33780.1"/>
    <property type="molecule type" value="Genomic_DNA"/>
</dbReference>
<dbReference type="SMR" id="Q1JHF6"/>
<dbReference type="KEGG" id="sph:MGAS10270_Spy0715"/>
<dbReference type="HOGENOM" id="CLU_047363_0_1_9"/>
<dbReference type="Proteomes" id="UP000002436">
    <property type="component" value="Chromosome"/>
</dbReference>
<dbReference type="GO" id="GO:0005829">
    <property type="term" value="C:cytosol"/>
    <property type="evidence" value="ECO:0007669"/>
    <property type="project" value="TreeGrafter"/>
</dbReference>
<dbReference type="GO" id="GO:0052906">
    <property type="term" value="F:tRNA (guanine(37)-N1)-methyltransferase activity"/>
    <property type="evidence" value="ECO:0007669"/>
    <property type="project" value="UniProtKB-UniRule"/>
</dbReference>
<dbReference type="GO" id="GO:0002939">
    <property type="term" value="P:tRNA N1-guanine methylation"/>
    <property type="evidence" value="ECO:0007669"/>
    <property type="project" value="TreeGrafter"/>
</dbReference>
<dbReference type="CDD" id="cd18080">
    <property type="entry name" value="TrmD-like"/>
    <property type="match status" value="1"/>
</dbReference>
<dbReference type="FunFam" id="1.10.1270.20:FF:000001">
    <property type="entry name" value="tRNA (guanine-N(1)-)-methyltransferase"/>
    <property type="match status" value="1"/>
</dbReference>
<dbReference type="FunFam" id="3.40.1280.10:FF:000001">
    <property type="entry name" value="tRNA (guanine-N(1)-)-methyltransferase"/>
    <property type="match status" value="1"/>
</dbReference>
<dbReference type="Gene3D" id="3.40.1280.10">
    <property type="match status" value="1"/>
</dbReference>
<dbReference type="Gene3D" id="1.10.1270.20">
    <property type="entry name" value="tRNA(m1g37)methyltransferase, domain 2"/>
    <property type="match status" value="1"/>
</dbReference>
<dbReference type="HAMAP" id="MF_00605">
    <property type="entry name" value="TrmD"/>
    <property type="match status" value="1"/>
</dbReference>
<dbReference type="InterPro" id="IPR029028">
    <property type="entry name" value="Alpha/beta_knot_MTases"/>
</dbReference>
<dbReference type="InterPro" id="IPR023148">
    <property type="entry name" value="tRNA_m1G_MeTrfase_C_sf"/>
</dbReference>
<dbReference type="InterPro" id="IPR002649">
    <property type="entry name" value="tRNA_m1G_MeTrfase_TrmD"/>
</dbReference>
<dbReference type="InterPro" id="IPR029026">
    <property type="entry name" value="tRNA_m1G_MTases_N"/>
</dbReference>
<dbReference type="InterPro" id="IPR016009">
    <property type="entry name" value="tRNA_MeTrfase_TRMD/TRM10"/>
</dbReference>
<dbReference type="NCBIfam" id="NF000648">
    <property type="entry name" value="PRK00026.1"/>
    <property type="match status" value="1"/>
</dbReference>
<dbReference type="NCBIfam" id="TIGR00088">
    <property type="entry name" value="trmD"/>
    <property type="match status" value="1"/>
</dbReference>
<dbReference type="PANTHER" id="PTHR46417">
    <property type="entry name" value="TRNA (GUANINE-N(1)-)-METHYLTRANSFERASE"/>
    <property type="match status" value="1"/>
</dbReference>
<dbReference type="PANTHER" id="PTHR46417:SF1">
    <property type="entry name" value="TRNA (GUANINE-N(1)-)-METHYLTRANSFERASE"/>
    <property type="match status" value="1"/>
</dbReference>
<dbReference type="Pfam" id="PF01746">
    <property type="entry name" value="tRNA_m1G_MT"/>
    <property type="match status" value="1"/>
</dbReference>
<dbReference type="PIRSF" id="PIRSF000386">
    <property type="entry name" value="tRNA_mtase"/>
    <property type="match status" value="1"/>
</dbReference>
<dbReference type="SUPFAM" id="SSF75217">
    <property type="entry name" value="alpha/beta knot"/>
    <property type="match status" value="1"/>
</dbReference>
<proteinExistence type="inferred from homology"/>
<name>TRMD_STRPD</name>